<reference key="1">
    <citation type="journal article" date="2000" name="DNA Res.">
        <title>Prediction of the coding sequences of unidentified human genes. XIX. The complete sequences of 100 new cDNA clones from brain which code for large proteins in vitro.</title>
        <authorList>
            <person name="Nagase T."/>
            <person name="Kikuno R."/>
            <person name="Hattori A."/>
            <person name="Kondo Y."/>
            <person name="Okumura K."/>
            <person name="Ohara O."/>
        </authorList>
    </citation>
    <scope>NUCLEOTIDE SEQUENCE [LARGE SCALE MRNA] OF 1-105</scope>
    <source>
        <tissue>Brain</tissue>
    </source>
</reference>
<reference key="2">
    <citation type="journal article" date="2004" name="Nat. Genet.">
        <title>Complete sequencing and characterization of 21,243 full-length human cDNAs.</title>
        <authorList>
            <person name="Ota T."/>
            <person name="Suzuki Y."/>
            <person name="Nishikawa T."/>
            <person name="Otsuki T."/>
            <person name="Sugiyama T."/>
            <person name="Irie R."/>
            <person name="Wakamatsu A."/>
            <person name="Hayashi K."/>
            <person name="Sato H."/>
            <person name="Nagai K."/>
            <person name="Kimura K."/>
            <person name="Makita H."/>
            <person name="Sekine M."/>
            <person name="Obayashi M."/>
            <person name="Nishi T."/>
            <person name="Shibahara T."/>
            <person name="Tanaka T."/>
            <person name="Ishii S."/>
            <person name="Yamamoto J."/>
            <person name="Saito K."/>
            <person name="Kawai Y."/>
            <person name="Isono Y."/>
            <person name="Nakamura Y."/>
            <person name="Nagahari K."/>
            <person name="Murakami K."/>
            <person name="Yasuda T."/>
            <person name="Iwayanagi T."/>
            <person name="Wagatsuma M."/>
            <person name="Shiratori A."/>
            <person name="Sudo H."/>
            <person name="Hosoiri T."/>
            <person name="Kaku Y."/>
            <person name="Kodaira H."/>
            <person name="Kondo H."/>
            <person name="Sugawara M."/>
            <person name="Takahashi M."/>
            <person name="Kanda K."/>
            <person name="Yokoi T."/>
            <person name="Furuya T."/>
            <person name="Kikkawa E."/>
            <person name="Omura Y."/>
            <person name="Abe K."/>
            <person name="Kamihara K."/>
            <person name="Katsuta N."/>
            <person name="Sato K."/>
            <person name="Tanikawa M."/>
            <person name="Yamazaki M."/>
            <person name="Ninomiya K."/>
            <person name="Ishibashi T."/>
            <person name="Yamashita H."/>
            <person name="Murakawa K."/>
            <person name="Fujimori K."/>
            <person name="Tanai H."/>
            <person name="Kimata M."/>
            <person name="Watanabe M."/>
            <person name="Hiraoka S."/>
            <person name="Chiba Y."/>
            <person name="Ishida S."/>
            <person name="Ono Y."/>
            <person name="Takiguchi S."/>
            <person name="Watanabe S."/>
            <person name="Yosida M."/>
            <person name="Hotuta T."/>
            <person name="Kusano J."/>
            <person name="Kanehori K."/>
            <person name="Takahashi-Fujii A."/>
            <person name="Hara H."/>
            <person name="Tanase T.-O."/>
            <person name="Nomura Y."/>
            <person name="Togiya S."/>
            <person name="Komai F."/>
            <person name="Hara R."/>
            <person name="Takeuchi K."/>
            <person name="Arita M."/>
            <person name="Imose N."/>
            <person name="Musashino K."/>
            <person name="Yuuki H."/>
            <person name="Oshima A."/>
            <person name="Sasaki N."/>
            <person name="Aotsuka S."/>
            <person name="Yoshikawa Y."/>
            <person name="Matsunawa H."/>
            <person name="Ichihara T."/>
            <person name="Shiohata N."/>
            <person name="Sano S."/>
            <person name="Moriya S."/>
            <person name="Momiyama H."/>
            <person name="Satoh N."/>
            <person name="Takami S."/>
            <person name="Terashima Y."/>
            <person name="Suzuki O."/>
            <person name="Nakagawa S."/>
            <person name="Senoh A."/>
            <person name="Mizoguchi H."/>
            <person name="Goto Y."/>
            <person name="Shimizu F."/>
            <person name="Wakebe H."/>
            <person name="Hishigaki H."/>
            <person name="Watanabe T."/>
            <person name="Sugiyama A."/>
            <person name="Takemoto M."/>
            <person name="Kawakami B."/>
            <person name="Yamazaki M."/>
            <person name="Watanabe K."/>
            <person name="Kumagai A."/>
            <person name="Itakura S."/>
            <person name="Fukuzumi Y."/>
            <person name="Fujimori Y."/>
            <person name="Komiyama M."/>
            <person name="Tashiro H."/>
            <person name="Tanigami A."/>
            <person name="Fujiwara T."/>
            <person name="Ono T."/>
            <person name="Yamada K."/>
            <person name="Fujii Y."/>
            <person name="Ozaki K."/>
            <person name="Hirao M."/>
            <person name="Ohmori Y."/>
            <person name="Kawabata A."/>
            <person name="Hikiji T."/>
            <person name="Kobatake N."/>
            <person name="Inagaki H."/>
            <person name="Ikema Y."/>
            <person name="Okamoto S."/>
            <person name="Okitani R."/>
            <person name="Kawakami T."/>
            <person name="Noguchi S."/>
            <person name="Itoh T."/>
            <person name="Shigeta K."/>
            <person name="Senba T."/>
            <person name="Matsumura K."/>
            <person name="Nakajima Y."/>
            <person name="Mizuno T."/>
            <person name="Morinaga M."/>
            <person name="Sasaki M."/>
            <person name="Togashi T."/>
            <person name="Oyama M."/>
            <person name="Hata H."/>
            <person name="Watanabe M."/>
            <person name="Komatsu T."/>
            <person name="Mizushima-Sugano J."/>
            <person name="Satoh T."/>
            <person name="Shirai Y."/>
            <person name="Takahashi Y."/>
            <person name="Nakagawa K."/>
            <person name="Okumura K."/>
            <person name="Nagase T."/>
            <person name="Nomura N."/>
            <person name="Kikuchi H."/>
            <person name="Masuho Y."/>
            <person name="Yamashita R."/>
            <person name="Nakai K."/>
            <person name="Yada T."/>
            <person name="Nakamura Y."/>
            <person name="Ohara O."/>
            <person name="Isogai T."/>
            <person name="Sugano S."/>
        </authorList>
    </citation>
    <scope>NUCLEOTIDE SEQUENCE [LARGE SCALE MRNA] OF 41-648</scope>
    <source>
        <tissue>Brain</tissue>
    </source>
</reference>
<reference key="3">
    <citation type="journal article" date="2007" name="Nature">
        <title>Patterns of somatic mutation in human cancer genomes.</title>
        <authorList>
            <person name="Greenman C."/>
            <person name="Stephens P."/>
            <person name="Smith R."/>
            <person name="Dalgliesh G.L."/>
            <person name="Hunter C."/>
            <person name="Bignell G."/>
            <person name="Davies H."/>
            <person name="Teague J."/>
            <person name="Butler A."/>
            <person name="Stevens C."/>
            <person name="Edkins S."/>
            <person name="O'Meara S."/>
            <person name="Vastrik I."/>
            <person name="Schmidt E.E."/>
            <person name="Avis T."/>
            <person name="Barthorpe S."/>
            <person name="Bhamra G."/>
            <person name="Buck G."/>
            <person name="Choudhury B."/>
            <person name="Clements J."/>
            <person name="Cole J."/>
            <person name="Dicks E."/>
            <person name="Forbes S."/>
            <person name="Gray K."/>
            <person name="Halliday K."/>
            <person name="Harrison R."/>
            <person name="Hills K."/>
            <person name="Hinton J."/>
            <person name="Jenkinson A."/>
            <person name="Jones D."/>
            <person name="Menzies A."/>
            <person name="Mironenko T."/>
            <person name="Perry J."/>
            <person name="Raine K."/>
            <person name="Richardson D."/>
            <person name="Shepherd R."/>
            <person name="Small A."/>
            <person name="Tofts C."/>
            <person name="Varian J."/>
            <person name="Webb T."/>
            <person name="West S."/>
            <person name="Widaa S."/>
            <person name="Yates A."/>
            <person name="Cahill D.P."/>
            <person name="Louis D.N."/>
            <person name="Goldstraw P."/>
            <person name="Nicholson A.G."/>
            <person name="Brasseur F."/>
            <person name="Looijenga L."/>
            <person name="Weber B.L."/>
            <person name="Chiew Y.-E."/>
            <person name="DeFazio A."/>
            <person name="Greaves M.F."/>
            <person name="Green A.R."/>
            <person name="Campbell P."/>
            <person name="Birney E."/>
            <person name="Easton D.F."/>
            <person name="Chenevix-Trench G."/>
            <person name="Tan M.-H."/>
            <person name="Khoo S.K."/>
            <person name="Teh B.T."/>
            <person name="Yuen S.T."/>
            <person name="Leung S.Y."/>
            <person name="Wooster R."/>
            <person name="Futreal P.A."/>
            <person name="Stratton M.R."/>
        </authorList>
    </citation>
    <scope>VARIANTS [LARGE SCALE ANALYSIS] GLN-24; LEU-108; LYS-422; ASN-472; CYS-554; ARG-570; ALA-596 AND ASP-633</scope>
</reference>
<gene>
    <name type="primary">DCLK3</name>
    <name type="synonym">DCAMKL3</name>
    <name type="synonym">DCDC3C</name>
    <name type="synonym">KIAA1765</name>
</gene>
<accession>Q9C098</accession>
<organism>
    <name type="scientific">Homo sapiens</name>
    <name type="common">Human</name>
    <dbReference type="NCBI Taxonomy" id="9606"/>
    <lineage>
        <taxon>Eukaryota</taxon>
        <taxon>Metazoa</taxon>
        <taxon>Chordata</taxon>
        <taxon>Craniata</taxon>
        <taxon>Vertebrata</taxon>
        <taxon>Euteleostomi</taxon>
        <taxon>Mammalia</taxon>
        <taxon>Eutheria</taxon>
        <taxon>Euarchontoglires</taxon>
        <taxon>Primates</taxon>
        <taxon>Haplorrhini</taxon>
        <taxon>Catarrhini</taxon>
        <taxon>Hominidae</taxon>
        <taxon>Homo</taxon>
    </lineage>
</organism>
<keyword id="KW-0067">ATP-binding</keyword>
<keyword id="KW-0963">Cytoplasm</keyword>
<keyword id="KW-0418">Kinase</keyword>
<keyword id="KW-0547">Nucleotide-binding</keyword>
<keyword id="KW-0539">Nucleus</keyword>
<keyword id="KW-1267">Proteomics identification</keyword>
<keyword id="KW-1185">Reference proteome</keyword>
<keyword id="KW-0723">Serine/threonine-protein kinase</keyword>
<keyword id="KW-0808">Transferase</keyword>
<name>DCLK3_HUMAN</name>
<proteinExistence type="evidence at protein level"/>
<comment type="catalytic activity">
    <reaction>
        <text>L-seryl-[protein] + ATP = O-phospho-L-seryl-[protein] + ADP + H(+)</text>
        <dbReference type="Rhea" id="RHEA:17989"/>
        <dbReference type="Rhea" id="RHEA-COMP:9863"/>
        <dbReference type="Rhea" id="RHEA-COMP:11604"/>
        <dbReference type="ChEBI" id="CHEBI:15378"/>
        <dbReference type="ChEBI" id="CHEBI:29999"/>
        <dbReference type="ChEBI" id="CHEBI:30616"/>
        <dbReference type="ChEBI" id="CHEBI:83421"/>
        <dbReference type="ChEBI" id="CHEBI:456216"/>
        <dbReference type="EC" id="2.7.11.1"/>
    </reaction>
</comment>
<comment type="catalytic activity">
    <reaction>
        <text>L-threonyl-[protein] + ATP = O-phospho-L-threonyl-[protein] + ADP + H(+)</text>
        <dbReference type="Rhea" id="RHEA:46608"/>
        <dbReference type="Rhea" id="RHEA-COMP:11060"/>
        <dbReference type="Rhea" id="RHEA-COMP:11605"/>
        <dbReference type="ChEBI" id="CHEBI:15378"/>
        <dbReference type="ChEBI" id="CHEBI:30013"/>
        <dbReference type="ChEBI" id="CHEBI:30616"/>
        <dbReference type="ChEBI" id="CHEBI:61977"/>
        <dbReference type="ChEBI" id="CHEBI:456216"/>
        <dbReference type="EC" id="2.7.11.1"/>
    </reaction>
</comment>
<comment type="subcellular location">
    <subcellularLocation>
        <location evidence="1">Cytoplasm</location>
    </subcellularLocation>
    <subcellularLocation>
        <location evidence="1">Nucleus</location>
    </subcellularLocation>
</comment>
<comment type="similarity">
    <text evidence="6">Belongs to the protein kinase superfamily. CAMK Ser/Thr protein kinase family. CaMK subfamily.</text>
</comment>
<evidence type="ECO:0000250" key="1"/>
<evidence type="ECO:0000255" key="2">
    <source>
        <dbReference type="PROSITE-ProRule" id="PRU00159"/>
    </source>
</evidence>
<evidence type="ECO:0000255" key="3">
    <source>
        <dbReference type="PROSITE-ProRule" id="PRU10027"/>
    </source>
</evidence>
<evidence type="ECO:0000256" key="4">
    <source>
        <dbReference type="SAM" id="MobiDB-lite"/>
    </source>
</evidence>
<evidence type="ECO:0000269" key="5">
    <source>
    </source>
</evidence>
<evidence type="ECO:0000305" key="6"/>
<protein>
    <recommendedName>
        <fullName>Serine/threonine-protein kinase DCLK3</fullName>
        <ecNumber>2.7.11.1</ecNumber>
    </recommendedName>
    <alternativeName>
        <fullName>Doublecortin domain-containing protein 3C</fullName>
    </alternativeName>
    <alternativeName>
        <fullName>Doublecortin-like and CAM kinase-like 3</fullName>
    </alternativeName>
    <alternativeName>
        <fullName>Doublecortin-like kinase 3</fullName>
    </alternativeName>
</protein>
<dbReference type="EC" id="2.7.11.1"/>
<dbReference type="EMBL" id="DA523113">
    <property type="status" value="NOT_ANNOTATED_CDS"/>
    <property type="molecule type" value="mRNA"/>
</dbReference>
<dbReference type="EMBL" id="AB051552">
    <property type="protein sequence ID" value="BAB21856.1"/>
    <property type="molecule type" value="mRNA"/>
</dbReference>
<dbReference type="CCDS" id="CCDS43064.1"/>
<dbReference type="RefSeq" id="NP_208382.1">
    <property type="nucleotide sequence ID" value="NM_033403.1"/>
</dbReference>
<dbReference type="RefSeq" id="XP_011532469.1">
    <property type="nucleotide sequence ID" value="XM_011534167.2"/>
</dbReference>
<dbReference type="SMR" id="Q9C098"/>
<dbReference type="BioGRID" id="124530">
    <property type="interactions" value="5"/>
</dbReference>
<dbReference type="FunCoup" id="Q9C098">
    <property type="interactions" value="1100"/>
</dbReference>
<dbReference type="IntAct" id="Q9C098">
    <property type="interactions" value="8"/>
</dbReference>
<dbReference type="STRING" id="9606.ENSP00000394484"/>
<dbReference type="BindingDB" id="Q9C098"/>
<dbReference type="ChEMBL" id="CHEMBL6123"/>
<dbReference type="DrugBank" id="DB12010">
    <property type="generic name" value="Fostamatinib"/>
</dbReference>
<dbReference type="DrugCentral" id="Q9C098"/>
<dbReference type="iPTMnet" id="Q9C098"/>
<dbReference type="PhosphoSitePlus" id="Q9C098"/>
<dbReference type="BioMuta" id="DCLK3"/>
<dbReference type="DMDM" id="115502142"/>
<dbReference type="CPTAC" id="CPTAC-2832"/>
<dbReference type="CPTAC" id="CPTAC-2833"/>
<dbReference type="jPOST" id="Q9C098"/>
<dbReference type="MassIVE" id="Q9C098"/>
<dbReference type="PaxDb" id="9606-ENSP00000394484"/>
<dbReference type="PeptideAtlas" id="Q9C098"/>
<dbReference type="ProteomicsDB" id="79972"/>
<dbReference type="Antibodypedia" id="28151">
    <property type="antibodies" value="105 antibodies from 30 providers"/>
</dbReference>
<dbReference type="DNASU" id="85443"/>
<dbReference type="Ensembl" id="ENST00000416516.2">
    <property type="protein sequence ID" value="ENSP00000394484.2"/>
    <property type="gene ID" value="ENSG00000163673.8"/>
</dbReference>
<dbReference type="GeneID" id="85443"/>
<dbReference type="KEGG" id="hsa:85443"/>
<dbReference type="UCSC" id="uc003cgi.2">
    <property type="organism name" value="human"/>
</dbReference>
<dbReference type="AGR" id="HGNC:19005"/>
<dbReference type="CTD" id="85443"/>
<dbReference type="DisGeNET" id="85443"/>
<dbReference type="GeneCards" id="DCLK3"/>
<dbReference type="HGNC" id="HGNC:19005">
    <property type="gene designation" value="DCLK3"/>
</dbReference>
<dbReference type="HPA" id="ENSG00000163673">
    <property type="expression patterns" value="Tissue enhanced (brain, testis)"/>
</dbReference>
<dbReference type="MIM" id="613167">
    <property type="type" value="gene"/>
</dbReference>
<dbReference type="neXtProt" id="NX_Q9C098"/>
<dbReference type="OpenTargets" id="ENSG00000163673"/>
<dbReference type="PharmGKB" id="PA162383403"/>
<dbReference type="VEuPathDB" id="HostDB:ENSG00000163673"/>
<dbReference type="eggNOG" id="KOG0032">
    <property type="taxonomic scope" value="Eukaryota"/>
</dbReference>
<dbReference type="GeneTree" id="ENSGT00940000159476"/>
<dbReference type="HOGENOM" id="CLU_000288_94_2_1"/>
<dbReference type="InParanoid" id="Q9C098"/>
<dbReference type="OMA" id="VRAQKKW"/>
<dbReference type="OrthoDB" id="1738954at2759"/>
<dbReference type="PAN-GO" id="Q9C098">
    <property type="GO annotations" value="4 GO annotations based on evolutionary models"/>
</dbReference>
<dbReference type="PhylomeDB" id="Q9C098"/>
<dbReference type="TreeFam" id="TF318770"/>
<dbReference type="PathwayCommons" id="Q9C098"/>
<dbReference type="SignaLink" id="Q9C098"/>
<dbReference type="BioGRID-ORCS" id="85443">
    <property type="hits" value="15 hits in 1178 CRISPR screens"/>
</dbReference>
<dbReference type="GenomeRNAi" id="85443"/>
<dbReference type="Pharos" id="Q9C098">
    <property type="development level" value="Tchem"/>
</dbReference>
<dbReference type="PRO" id="PR:Q9C098"/>
<dbReference type="Proteomes" id="UP000005640">
    <property type="component" value="Chromosome 3"/>
</dbReference>
<dbReference type="RNAct" id="Q9C098">
    <property type="molecule type" value="protein"/>
</dbReference>
<dbReference type="Bgee" id="ENSG00000163673">
    <property type="expression patterns" value="Expressed in sural nerve and 98 other cell types or tissues"/>
</dbReference>
<dbReference type="ExpressionAtlas" id="Q9C098">
    <property type="expression patterns" value="baseline and differential"/>
</dbReference>
<dbReference type="GO" id="GO:0005737">
    <property type="term" value="C:cytoplasm"/>
    <property type="evidence" value="ECO:0000318"/>
    <property type="project" value="GO_Central"/>
</dbReference>
<dbReference type="GO" id="GO:0005634">
    <property type="term" value="C:nucleus"/>
    <property type="evidence" value="ECO:0000318"/>
    <property type="project" value="GO_Central"/>
</dbReference>
<dbReference type="GO" id="GO:0005524">
    <property type="term" value="F:ATP binding"/>
    <property type="evidence" value="ECO:0007669"/>
    <property type="project" value="UniProtKB-KW"/>
</dbReference>
<dbReference type="GO" id="GO:0106310">
    <property type="term" value="F:protein serine kinase activity"/>
    <property type="evidence" value="ECO:0007669"/>
    <property type="project" value="RHEA"/>
</dbReference>
<dbReference type="GO" id="GO:0004674">
    <property type="term" value="F:protein serine/threonine kinase activity"/>
    <property type="evidence" value="ECO:0000318"/>
    <property type="project" value="GO_Central"/>
</dbReference>
<dbReference type="GO" id="GO:0034504">
    <property type="term" value="P:protein localization to nucleus"/>
    <property type="evidence" value="ECO:0000318"/>
    <property type="project" value="GO_Central"/>
</dbReference>
<dbReference type="CDD" id="cd14185">
    <property type="entry name" value="STKc_DCKL3"/>
    <property type="match status" value="1"/>
</dbReference>
<dbReference type="FunFam" id="1.10.510.10:FF:000066">
    <property type="entry name" value="Serine/threonine-protein kinase DCLK1 isoform 2"/>
    <property type="match status" value="1"/>
</dbReference>
<dbReference type="FunFam" id="3.30.200.20:FF:000057">
    <property type="entry name" value="Serine/threonine-protein kinase DCLK1 isoform 2"/>
    <property type="match status" value="1"/>
</dbReference>
<dbReference type="Gene3D" id="3.30.200.20">
    <property type="entry name" value="Phosphorylase Kinase, domain 1"/>
    <property type="match status" value="1"/>
</dbReference>
<dbReference type="Gene3D" id="1.10.510.10">
    <property type="entry name" value="Transferase(Phosphotransferase) domain 1"/>
    <property type="match status" value="1"/>
</dbReference>
<dbReference type="InterPro" id="IPR011009">
    <property type="entry name" value="Kinase-like_dom_sf"/>
</dbReference>
<dbReference type="InterPro" id="IPR000719">
    <property type="entry name" value="Prot_kinase_dom"/>
</dbReference>
<dbReference type="InterPro" id="IPR017441">
    <property type="entry name" value="Protein_kinase_ATP_BS"/>
</dbReference>
<dbReference type="InterPro" id="IPR008271">
    <property type="entry name" value="Ser/Thr_kinase_AS"/>
</dbReference>
<dbReference type="PANTHER" id="PTHR24347">
    <property type="entry name" value="SERINE/THREONINE-PROTEIN KINASE"/>
    <property type="match status" value="1"/>
</dbReference>
<dbReference type="Pfam" id="PF00069">
    <property type="entry name" value="Pkinase"/>
    <property type="match status" value="1"/>
</dbReference>
<dbReference type="SMART" id="SM00220">
    <property type="entry name" value="S_TKc"/>
    <property type="match status" value="1"/>
</dbReference>
<dbReference type="SUPFAM" id="SSF56112">
    <property type="entry name" value="Protein kinase-like (PK-like)"/>
    <property type="match status" value="1"/>
</dbReference>
<dbReference type="PROSITE" id="PS00107">
    <property type="entry name" value="PROTEIN_KINASE_ATP"/>
    <property type="match status" value="1"/>
</dbReference>
<dbReference type="PROSITE" id="PS50011">
    <property type="entry name" value="PROTEIN_KINASE_DOM"/>
    <property type="match status" value="1"/>
</dbReference>
<dbReference type="PROSITE" id="PS00108">
    <property type="entry name" value="PROTEIN_KINASE_ST"/>
    <property type="match status" value="1"/>
</dbReference>
<sequence>MGKEPLTLKSIQVAVEELYPNKARALTLAQHSRAPSPRLRSRLFSKALKGDHRCGETETPKSCSEVAGCKAAMRHQGKIPEELSLDDRARTQKKWGRGKWEPEPSSKPPREATLEERHARGEKHLGVEIEKTSGEIIRCEKCKRERELQQSLERERLSLGTSELDMGKGPMYDVEKLVRTRSCRRSPEANPASGEEGWKGDSHRSSPRNPTQELRRPSKSMDKKEDRGPEDQESHAQGAAKAKKDLVEVLPVTEEGLREVKKDTRPMSRSKHGGWLLREHQAGFEKLRRTRGEEKEAEKEKKPCMSGGRRMTLRDDQPAKLEKEPKTRPEENKPERPSGRKPRPMGIIAANVEKHYETGRVIGDGNFAVVKECRHRETRQAYAMKIIDKSRLKGKEDMVDSEILIIQSLSHPNIVKLHEVYETDMEIYLILEYVQGGDLFDAIIESVKFPEPDAALMIMDLCKALVHMHDKSIVHRDLKPENLLVQRNEDKSTTLKLADFGLAKHVVRPIFTVCGTPTYVAPEILSEKGYGLEVDMWAAGVILYILLCGFPPFRSPERDQDELFNIIQLGHFEFLPPYWDNISDAAKDLVSRLLVVDPKKRYTAHQVLQHPWIETAGKTNTVKRQKQVSPSSEGHFRSQHKRVVEQVS</sequence>
<feature type="chain" id="PRO_0000252254" description="Serine/threonine-protein kinase DCLK3">
    <location>
        <begin position="1"/>
        <end position="648"/>
    </location>
</feature>
<feature type="domain" description="Protein kinase" evidence="2">
    <location>
        <begin position="356"/>
        <end position="613"/>
    </location>
</feature>
<feature type="region of interest" description="Disordered" evidence="4">
    <location>
        <begin position="86"/>
        <end position="127"/>
    </location>
</feature>
<feature type="region of interest" description="Disordered" evidence="4">
    <location>
        <begin position="150"/>
        <end position="345"/>
    </location>
</feature>
<feature type="region of interest" description="Disordered" evidence="4">
    <location>
        <begin position="628"/>
        <end position="648"/>
    </location>
</feature>
<feature type="compositionally biased region" description="Basic and acidic residues" evidence="4">
    <location>
        <begin position="98"/>
        <end position="127"/>
    </location>
</feature>
<feature type="compositionally biased region" description="Basic and acidic residues" evidence="4">
    <location>
        <begin position="213"/>
        <end position="234"/>
    </location>
</feature>
<feature type="compositionally biased region" description="Basic and acidic residues" evidence="4">
    <location>
        <begin position="255"/>
        <end position="266"/>
    </location>
</feature>
<feature type="compositionally biased region" description="Basic and acidic residues" evidence="4">
    <location>
        <begin position="277"/>
        <end position="303"/>
    </location>
</feature>
<feature type="compositionally biased region" description="Basic and acidic residues" evidence="4">
    <location>
        <begin position="312"/>
        <end position="338"/>
    </location>
</feature>
<feature type="active site" description="Proton acceptor" evidence="2 3">
    <location>
        <position position="477"/>
    </location>
</feature>
<feature type="binding site" evidence="2">
    <location>
        <begin position="362"/>
        <end position="370"/>
    </location>
    <ligand>
        <name>ATP</name>
        <dbReference type="ChEBI" id="CHEBI:30616"/>
    </ligand>
</feature>
<feature type="binding site" evidence="2">
    <location>
        <position position="385"/>
    </location>
    <ligand>
        <name>ATP</name>
        <dbReference type="ChEBI" id="CHEBI:30616"/>
    </ligand>
</feature>
<feature type="sequence variant" id="VAR_040444" description="In dbSNP:rs56070233." evidence="5">
    <original>R</original>
    <variation>Q</variation>
    <location>
        <position position="24"/>
    </location>
</feature>
<feature type="sequence variant" id="VAR_040445" description="In a breast infiltrating ductal carcinoma sample; somatic mutation." evidence="5">
    <original>P</original>
    <variation>L</variation>
    <location>
        <position position="108"/>
    </location>
</feature>
<feature type="sequence variant" id="VAR_040446" description="In a colorectal adenocarcinoma sample; somatic mutation; dbSNP:rs373605259." evidence="5">
    <original>E</original>
    <variation>K</variation>
    <location>
        <position position="422"/>
    </location>
</feature>
<feature type="sequence variant" id="VAR_040447" description="In a lung large cell carcinoma sample; somatic mutation." evidence="5">
    <original>S</original>
    <variation>N</variation>
    <location>
        <position position="472"/>
    </location>
</feature>
<feature type="sequence variant" id="VAR_040448" description="In a lung squamous cell carcinoma sample; somatic mutation; dbSNP:rs374711533." evidence="5">
    <original>R</original>
    <variation>C</variation>
    <location>
        <position position="554"/>
    </location>
</feature>
<feature type="sequence variant" id="VAR_040449" description="In a renal clear cell carcinoma sample; somatic mutation." evidence="5">
    <original>G</original>
    <variation>R</variation>
    <location>
        <position position="570"/>
    </location>
</feature>
<feature type="sequence variant" id="VAR_040450" description="In a colorectal adenocarcinoma sample; somatic mutation." evidence="5">
    <original>V</original>
    <variation>A</variation>
    <location>
        <position position="596"/>
    </location>
</feature>
<feature type="sequence variant" id="VAR_040451" description="In dbSNP:rs35704209." evidence="5">
    <original>E</original>
    <variation>D</variation>
    <location>
        <position position="633"/>
    </location>
</feature>